<sequence>MSDDAVKQMKQVVAKAAADRVQSGMVVGLGTGSTTAFVIQFLGDRLRKGELSNIVGVPTSFQASVLAKKYGIPLVTLDDVEKLDIAIDGADEVDPAKNLIKGGGAAHTREKIVDSLAEQFLVVVDSSKLVQKLGSTFPVPVEVLPFAVAPVTRALKALGGEPELRMGVKKDGPVVTDQGNFVLDVRFDDIPDPAELEKAINNIPGVVENGLFVNVADVILVGEIVDGQPQVREIFH</sequence>
<comment type="function">
    <text evidence="1">Catalyzes the reversible conversion of ribose-5-phosphate to ribulose 5-phosphate.</text>
</comment>
<comment type="catalytic activity">
    <reaction evidence="1">
        <text>aldehydo-D-ribose 5-phosphate = D-ribulose 5-phosphate</text>
        <dbReference type="Rhea" id="RHEA:14657"/>
        <dbReference type="ChEBI" id="CHEBI:58121"/>
        <dbReference type="ChEBI" id="CHEBI:58273"/>
        <dbReference type="EC" id="5.3.1.6"/>
    </reaction>
</comment>
<comment type="pathway">
    <text evidence="1">Carbohydrate degradation; pentose phosphate pathway; D-ribose 5-phosphate from D-ribulose 5-phosphate (non-oxidative stage): step 1/1.</text>
</comment>
<comment type="subunit">
    <text evidence="1">Homodimer.</text>
</comment>
<comment type="similarity">
    <text evidence="1">Belongs to the ribose 5-phosphate isomerase family.</text>
</comment>
<gene>
    <name evidence="1" type="primary">rpiA</name>
    <name type="ordered locus">tll1273</name>
</gene>
<accession>Q8DJF2</accession>
<keyword id="KW-0413">Isomerase</keyword>
<keyword id="KW-1185">Reference proteome</keyword>
<proteinExistence type="inferred from homology"/>
<name>RPIA_THEVB</name>
<dbReference type="EC" id="5.3.1.6" evidence="1"/>
<dbReference type="EMBL" id="BA000039">
    <property type="protein sequence ID" value="BAC08825.1"/>
    <property type="molecule type" value="Genomic_DNA"/>
</dbReference>
<dbReference type="RefSeq" id="NP_682063.1">
    <property type="nucleotide sequence ID" value="NC_004113.1"/>
</dbReference>
<dbReference type="RefSeq" id="WP_011057113.1">
    <property type="nucleotide sequence ID" value="NC_004113.1"/>
</dbReference>
<dbReference type="SMR" id="Q8DJF2"/>
<dbReference type="STRING" id="197221.gene:10747869"/>
<dbReference type="EnsemblBacteria" id="BAC08825">
    <property type="protein sequence ID" value="BAC08825"/>
    <property type="gene ID" value="BAC08825"/>
</dbReference>
<dbReference type="KEGG" id="tel:tll1273"/>
<dbReference type="PATRIC" id="fig|197221.4.peg.1340"/>
<dbReference type="eggNOG" id="COG0120">
    <property type="taxonomic scope" value="Bacteria"/>
</dbReference>
<dbReference type="UniPathway" id="UPA00115">
    <property type="reaction ID" value="UER00412"/>
</dbReference>
<dbReference type="Proteomes" id="UP000000440">
    <property type="component" value="Chromosome"/>
</dbReference>
<dbReference type="GO" id="GO:0005829">
    <property type="term" value="C:cytosol"/>
    <property type="evidence" value="ECO:0007669"/>
    <property type="project" value="TreeGrafter"/>
</dbReference>
<dbReference type="GO" id="GO:0004751">
    <property type="term" value="F:ribose-5-phosphate isomerase activity"/>
    <property type="evidence" value="ECO:0007669"/>
    <property type="project" value="UniProtKB-UniRule"/>
</dbReference>
<dbReference type="GO" id="GO:0006014">
    <property type="term" value="P:D-ribose metabolic process"/>
    <property type="evidence" value="ECO:0007669"/>
    <property type="project" value="TreeGrafter"/>
</dbReference>
<dbReference type="GO" id="GO:0009052">
    <property type="term" value="P:pentose-phosphate shunt, non-oxidative branch"/>
    <property type="evidence" value="ECO:0007669"/>
    <property type="project" value="UniProtKB-UniRule"/>
</dbReference>
<dbReference type="CDD" id="cd01398">
    <property type="entry name" value="RPI_A"/>
    <property type="match status" value="1"/>
</dbReference>
<dbReference type="FunFam" id="3.30.70.260:FF:000018">
    <property type="entry name" value="Ribose-5-phosphate isomerase A"/>
    <property type="match status" value="1"/>
</dbReference>
<dbReference type="FunFam" id="3.40.50.1360:FF:000001">
    <property type="entry name" value="Ribose-5-phosphate isomerase A"/>
    <property type="match status" value="1"/>
</dbReference>
<dbReference type="Gene3D" id="3.30.70.260">
    <property type="match status" value="1"/>
</dbReference>
<dbReference type="Gene3D" id="3.40.50.1360">
    <property type="match status" value="1"/>
</dbReference>
<dbReference type="HAMAP" id="MF_00170">
    <property type="entry name" value="Rib_5P_isom_A"/>
    <property type="match status" value="1"/>
</dbReference>
<dbReference type="InterPro" id="IPR037171">
    <property type="entry name" value="NagB/RpiA_transferase-like"/>
</dbReference>
<dbReference type="InterPro" id="IPR020672">
    <property type="entry name" value="Ribose5P_isomerase_typA_subgr"/>
</dbReference>
<dbReference type="InterPro" id="IPR004788">
    <property type="entry name" value="Ribose5P_isomerase_type_A"/>
</dbReference>
<dbReference type="NCBIfam" id="NF001924">
    <property type="entry name" value="PRK00702.1"/>
    <property type="match status" value="1"/>
</dbReference>
<dbReference type="NCBIfam" id="TIGR00021">
    <property type="entry name" value="rpiA"/>
    <property type="match status" value="1"/>
</dbReference>
<dbReference type="PANTHER" id="PTHR11934">
    <property type="entry name" value="RIBOSE-5-PHOSPHATE ISOMERASE"/>
    <property type="match status" value="1"/>
</dbReference>
<dbReference type="PANTHER" id="PTHR11934:SF0">
    <property type="entry name" value="RIBOSE-5-PHOSPHATE ISOMERASE"/>
    <property type="match status" value="1"/>
</dbReference>
<dbReference type="Pfam" id="PF06026">
    <property type="entry name" value="Rib_5-P_isom_A"/>
    <property type="match status" value="1"/>
</dbReference>
<dbReference type="SUPFAM" id="SSF75445">
    <property type="entry name" value="D-ribose-5-phosphate isomerase (RpiA), lid domain"/>
    <property type="match status" value="1"/>
</dbReference>
<dbReference type="SUPFAM" id="SSF100950">
    <property type="entry name" value="NagB/RpiA/CoA transferase-like"/>
    <property type="match status" value="1"/>
</dbReference>
<evidence type="ECO:0000255" key="1">
    <source>
        <dbReference type="HAMAP-Rule" id="MF_00170"/>
    </source>
</evidence>
<organism>
    <name type="scientific">Thermosynechococcus vestitus (strain NIES-2133 / IAM M-273 / BP-1)</name>
    <dbReference type="NCBI Taxonomy" id="197221"/>
    <lineage>
        <taxon>Bacteria</taxon>
        <taxon>Bacillati</taxon>
        <taxon>Cyanobacteriota</taxon>
        <taxon>Cyanophyceae</taxon>
        <taxon>Acaryochloridales</taxon>
        <taxon>Thermosynechococcaceae</taxon>
        <taxon>Thermosynechococcus</taxon>
    </lineage>
</organism>
<reference key="1">
    <citation type="journal article" date="2002" name="DNA Res.">
        <title>Complete genome structure of the thermophilic cyanobacterium Thermosynechococcus elongatus BP-1.</title>
        <authorList>
            <person name="Nakamura Y."/>
            <person name="Kaneko T."/>
            <person name="Sato S."/>
            <person name="Ikeuchi M."/>
            <person name="Katoh H."/>
            <person name="Sasamoto S."/>
            <person name="Watanabe A."/>
            <person name="Iriguchi M."/>
            <person name="Kawashima K."/>
            <person name="Kimura T."/>
            <person name="Kishida Y."/>
            <person name="Kiyokawa C."/>
            <person name="Kohara M."/>
            <person name="Matsumoto M."/>
            <person name="Matsuno A."/>
            <person name="Nakazaki N."/>
            <person name="Shimpo S."/>
            <person name="Sugimoto M."/>
            <person name="Takeuchi C."/>
            <person name="Yamada M."/>
            <person name="Tabata S."/>
        </authorList>
    </citation>
    <scope>NUCLEOTIDE SEQUENCE [LARGE SCALE GENOMIC DNA]</scope>
    <source>
        <strain>NIES-2133 / IAM M-273 / BP-1</strain>
    </source>
</reference>
<feature type="chain" id="PRO_0000158482" description="Ribose-5-phosphate isomerase A">
    <location>
        <begin position="1"/>
        <end position="236"/>
    </location>
</feature>
<feature type="active site" description="Proton acceptor" evidence="1">
    <location>
        <position position="110"/>
    </location>
</feature>
<feature type="binding site" evidence="1">
    <location>
        <begin position="31"/>
        <end position="34"/>
    </location>
    <ligand>
        <name>substrate</name>
    </ligand>
</feature>
<feature type="binding site" evidence="1">
    <location>
        <begin position="88"/>
        <end position="91"/>
    </location>
    <ligand>
        <name>substrate</name>
    </ligand>
</feature>
<feature type="binding site" evidence="1">
    <location>
        <begin position="101"/>
        <end position="104"/>
    </location>
    <ligand>
        <name>substrate</name>
    </ligand>
</feature>
<feature type="binding site" evidence="1">
    <location>
        <position position="128"/>
    </location>
    <ligand>
        <name>substrate</name>
    </ligand>
</feature>
<protein>
    <recommendedName>
        <fullName evidence="1">Ribose-5-phosphate isomerase A</fullName>
        <ecNumber evidence="1">5.3.1.6</ecNumber>
    </recommendedName>
    <alternativeName>
        <fullName evidence="1">Phosphoriboisomerase A</fullName>
        <shortName evidence="1">PRI</shortName>
    </alternativeName>
</protein>